<proteinExistence type="inferred from homology"/>
<comment type="catalytic activity">
    <reaction evidence="2">
        <text>gamma-L-glutamyl-L-cysteine + glycine + ATP = glutathione + ADP + phosphate + H(+)</text>
        <dbReference type="Rhea" id="RHEA:13557"/>
        <dbReference type="ChEBI" id="CHEBI:15378"/>
        <dbReference type="ChEBI" id="CHEBI:30616"/>
        <dbReference type="ChEBI" id="CHEBI:43474"/>
        <dbReference type="ChEBI" id="CHEBI:57305"/>
        <dbReference type="ChEBI" id="CHEBI:57925"/>
        <dbReference type="ChEBI" id="CHEBI:58173"/>
        <dbReference type="ChEBI" id="CHEBI:456216"/>
        <dbReference type="EC" id="6.3.2.3"/>
    </reaction>
</comment>
<comment type="cofactor">
    <cofactor evidence="1">
        <name>Mg(2+)</name>
        <dbReference type="ChEBI" id="CHEBI:18420"/>
    </cofactor>
    <cofactor evidence="1">
        <name>Mn(2+)</name>
        <dbReference type="ChEBI" id="CHEBI:29035"/>
    </cofactor>
    <text evidence="1">Binds 1 Mg(2+) or Mn(2+) ion per subunit.</text>
</comment>
<comment type="pathway">
    <text evidence="2">Sulfur metabolism; glutathione biosynthesis; glutathione from L-cysteine and L-glutamate: step 2/2.</text>
</comment>
<comment type="similarity">
    <text evidence="2">Belongs to the prokaryotic GSH synthase family.</text>
</comment>
<dbReference type="EC" id="6.3.2.3" evidence="2"/>
<dbReference type="EMBL" id="AE014299">
    <property type="protein sequence ID" value="AAN53907.1"/>
    <property type="molecule type" value="Genomic_DNA"/>
</dbReference>
<dbReference type="RefSeq" id="NP_716462.1">
    <property type="nucleotide sequence ID" value="NC_004347.2"/>
</dbReference>
<dbReference type="RefSeq" id="WP_011071123.1">
    <property type="nucleotide sequence ID" value="NC_004347.2"/>
</dbReference>
<dbReference type="SMR" id="Q8EIK8"/>
<dbReference type="STRING" id="211586.SO_0831"/>
<dbReference type="PaxDb" id="211586-SO_0831"/>
<dbReference type="KEGG" id="son:SO_0831"/>
<dbReference type="PATRIC" id="fig|211586.12.peg.797"/>
<dbReference type="eggNOG" id="COG0189">
    <property type="taxonomic scope" value="Bacteria"/>
</dbReference>
<dbReference type="HOGENOM" id="CLU_068239_0_0_6"/>
<dbReference type="OrthoDB" id="9785415at2"/>
<dbReference type="PhylomeDB" id="Q8EIK8"/>
<dbReference type="BioCyc" id="SONE211586:G1GMP-775-MONOMER"/>
<dbReference type="UniPathway" id="UPA00142">
    <property type="reaction ID" value="UER00210"/>
</dbReference>
<dbReference type="Proteomes" id="UP000008186">
    <property type="component" value="Chromosome"/>
</dbReference>
<dbReference type="GO" id="GO:0005737">
    <property type="term" value="C:cytoplasm"/>
    <property type="evidence" value="ECO:0000318"/>
    <property type="project" value="GO_Central"/>
</dbReference>
<dbReference type="GO" id="GO:0005524">
    <property type="term" value="F:ATP binding"/>
    <property type="evidence" value="ECO:0007669"/>
    <property type="project" value="UniProtKB-UniRule"/>
</dbReference>
<dbReference type="GO" id="GO:0004363">
    <property type="term" value="F:glutathione synthase activity"/>
    <property type="evidence" value="ECO:0000318"/>
    <property type="project" value="GO_Central"/>
</dbReference>
<dbReference type="GO" id="GO:0046872">
    <property type="term" value="F:metal ion binding"/>
    <property type="evidence" value="ECO:0007669"/>
    <property type="project" value="UniProtKB-KW"/>
</dbReference>
<dbReference type="FunFam" id="3.30.1490.20:FF:000009">
    <property type="entry name" value="Glutathione synthetase"/>
    <property type="match status" value="1"/>
</dbReference>
<dbReference type="FunFam" id="3.30.470.20:FF:000010">
    <property type="entry name" value="Glutathione synthetase"/>
    <property type="match status" value="1"/>
</dbReference>
<dbReference type="FunFam" id="3.40.50.20:FF:000009">
    <property type="entry name" value="Glutathione synthetase"/>
    <property type="match status" value="1"/>
</dbReference>
<dbReference type="Gene3D" id="3.40.50.20">
    <property type="match status" value="1"/>
</dbReference>
<dbReference type="Gene3D" id="3.30.1490.20">
    <property type="entry name" value="ATP-grasp fold, A domain"/>
    <property type="match status" value="1"/>
</dbReference>
<dbReference type="Gene3D" id="3.30.470.20">
    <property type="entry name" value="ATP-grasp fold, B domain"/>
    <property type="match status" value="1"/>
</dbReference>
<dbReference type="HAMAP" id="MF_00162">
    <property type="entry name" value="GSH_S"/>
    <property type="match status" value="1"/>
</dbReference>
<dbReference type="InterPro" id="IPR011761">
    <property type="entry name" value="ATP-grasp"/>
</dbReference>
<dbReference type="InterPro" id="IPR013815">
    <property type="entry name" value="ATP_grasp_subdomain_1"/>
</dbReference>
<dbReference type="InterPro" id="IPR006284">
    <property type="entry name" value="Glut_synth_pro"/>
</dbReference>
<dbReference type="InterPro" id="IPR004218">
    <property type="entry name" value="GSHS_ATP-bd"/>
</dbReference>
<dbReference type="InterPro" id="IPR004215">
    <property type="entry name" value="GSHS_N"/>
</dbReference>
<dbReference type="InterPro" id="IPR016185">
    <property type="entry name" value="PreATP-grasp_dom_sf"/>
</dbReference>
<dbReference type="NCBIfam" id="TIGR01380">
    <property type="entry name" value="glut_syn"/>
    <property type="match status" value="1"/>
</dbReference>
<dbReference type="NCBIfam" id="NF003573">
    <property type="entry name" value="PRK05246.1"/>
    <property type="match status" value="1"/>
</dbReference>
<dbReference type="PANTHER" id="PTHR21621:SF4">
    <property type="entry name" value="GLUTATHIONE SYNTHETASE"/>
    <property type="match status" value="1"/>
</dbReference>
<dbReference type="PANTHER" id="PTHR21621">
    <property type="entry name" value="RIBOSOMAL PROTEIN S6 MODIFICATION PROTEIN"/>
    <property type="match status" value="1"/>
</dbReference>
<dbReference type="Pfam" id="PF02955">
    <property type="entry name" value="GSH-S_ATP"/>
    <property type="match status" value="1"/>
</dbReference>
<dbReference type="Pfam" id="PF02951">
    <property type="entry name" value="GSH-S_N"/>
    <property type="match status" value="1"/>
</dbReference>
<dbReference type="SUPFAM" id="SSF56059">
    <property type="entry name" value="Glutathione synthetase ATP-binding domain-like"/>
    <property type="match status" value="1"/>
</dbReference>
<dbReference type="SUPFAM" id="SSF52440">
    <property type="entry name" value="PreATP-grasp domain"/>
    <property type="match status" value="1"/>
</dbReference>
<dbReference type="PROSITE" id="PS50975">
    <property type="entry name" value="ATP_GRASP"/>
    <property type="match status" value="1"/>
</dbReference>
<name>GSHB_SHEON</name>
<sequence>MIKLGIVMDPISEINIKKDSSFAMLMAAQERGYQLFYMEMADLAIVNGVAMGNMRPLKVMNDANHWFELGEAKDTPLSELNVVLMRKDPPFDTEYIYATYMLERAEEQGVLIVNKPQSLRDANEKLFTAWFSEFTPETIVTRDANRIRAFHQAKGDIILKPLDGMGGTSIFRVKQDDPNLGVIIETLTQYGNQYAMAQAFIPEITKGDKRILVVDGEPVPYALARIPKKGETRGNLAAGGSGVAQPLSDSDWKIARAIGPELKKRGLIFVGLDVIGDKLTEINVTSPTCIREIQAAFDVDITGMLFDAIETRLGQ</sequence>
<accession>Q8EIK8</accession>
<organism>
    <name type="scientific">Shewanella oneidensis (strain ATCC 700550 / JCM 31522 / CIP 106686 / LMG 19005 / NCIMB 14063 / MR-1)</name>
    <dbReference type="NCBI Taxonomy" id="211586"/>
    <lineage>
        <taxon>Bacteria</taxon>
        <taxon>Pseudomonadati</taxon>
        <taxon>Pseudomonadota</taxon>
        <taxon>Gammaproteobacteria</taxon>
        <taxon>Alteromonadales</taxon>
        <taxon>Shewanellaceae</taxon>
        <taxon>Shewanella</taxon>
    </lineage>
</organism>
<feature type="chain" id="PRO_0000197485" description="Glutathione synthetase">
    <location>
        <begin position="1"/>
        <end position="315"/>
    </location>
</feature>
<feature type="domain" description="ATP-grasp" evidence="2">
    <location>
        <begin position="125"/>
        <end position="310"/>
    </location>
</feature>
<feature type="binding site" evidence="2">
    <location>
        <begin position="151"/>
        <end position="207"/>
    </location>
    <ligand>
        <name>ATP</name>
        <dbReference type="ChEBI" id="CHEBI:30616"/>
    </ligand>
</feature>
<feature type="binding site" evidence="2">
    <location>
        <position position="281"/>
    </location>
    <ligand>
        <name>Mg(2+)</name>
        <dbReference type="ChEBI" id="CHEBI:18420"/>
    </ligand>
</feature>
<feature type="binding site" evidence="2">
    <location>
        <position position="283"/>
    </location>
    <ligand>
        <name>Mg(2+)</name>
        <dbReference type="ChEBI" id="CHEBI:18420"/>
    </ligand>
</feature>
<protein>
    <recommendedName>
        <fullName evidence="2">Glutathione synthetase</fullName>
        <ecNumber evidence="2">6.3.2.3</ecNumber>
    </recommendedName>
    <alternativeName>
        <fullName evidence="2">GSH synthetase</fullName>
        <shortName evidence="2">GSH-S</shortName>
        <shortName evidence="2">GSHase</shortName>
    </alternativeName>
    <alternativeName>
        <fullName evidence="2">Glutathione synthase</fullName>
    </alternativeName>
</protein>
<reference key="1">
    <citation type="journal article" date="2002" name="Nat. Biotechnol.">
        <title>Genome sequence of the dissimilatory metal ion-reducing bacterium Shewanella oneidensis.</title>
        <authorList>
            <person name="Heidelberg J.F."/>
            <person name="Paulsen I.T."/>
            <person name="Nelson K.E."/>
            <person name="Gaidos E.J."/>
            <person name="Nelson W.C."/>
            <person name="Read T.D."/>
            <person name="Eisen J.A."/>
            <person name="Seshadri R."/>
            <person name="Ward N.L."/>
            <person name="Methe B.A."/>
            <person name="Clayton R.A."/>
            <person name="Meyer T."/>
            <person name="Tsapin A."/>
            <person name="Scott J."/>
            <person name="Beanan M.J."/>
            <person name="Brinkac L.M."/>
            <person name="Daugherty S.C."/>
            <person name="DeBoy R.T."/>
            <person name="Dodson R.J."/>
            <person name="Durkin A.S."/>
            <person name="Haft D.H."/>
            <person name="Kolonay J.F."/>
            <person name="Madupu R."/>
            <person name="Peterson J.D."/>
            <person name="Umayam L.A."/>
            <person name="White O."/>
            <person name="Wolf A.M."/>
            <person name="Vamathevan J.J."/>
            <person name="Weidman J.F."/>
            <person name="Impraim M."/>
            <person name="Lee K."/>
            <person name="Berry K.J."/>
            <person name="Lee C."/>
            <person name="Mueller J."/>
            <person name="Khouri H.M."/>
            <person name="Gill J."/>
            <person name="Utterback T.R."/>
            <person name="McDonald L.A."/>
            <person name="Feldblyum T.V."/>
            <person name="Smith H.O."/>
            <person name="Venter J.C."/>
            <person name="Nealson K.H."/>
            <person name="Fraser C.M."/>
        </authorList>
    </citation>
    <scope>NUCLEOTIDE SEQUENCE [LARGE SCALE GENOMIC DNA]</scope>
    <source>
        <strain>ATCC 700550 / JCM 31522 / CIP 106686 / LMG 19005 / NCIMB 14063 / MR-1</strain>
    </source>
</reference>
<keyword id="KW-0067">ATP-binding</keyword>
<keyword id="KW-0317">Glutathione biosynthesis</keyword>
<keyword id="KW-0436">Ligase</keyword>
<keyword id="KW-0460">Magnesium</keyword>
<keyword id="KW-0464">Manganese</keyword>
<keyword id="KW-0479">Metal-binding</keyword>
<keyword id="KW-0547">Nucleotide-binding</keyword>
<keyword id="KW-1185">Reference proteome</keyword>
<evidence type="ECO:0000250" key="1"/>
<evidence type="ECO:0000255" key="2">
    <source>
        <dbReference type="HAMAP-Rule" id="MF_00162"/>
    </source>
</evidence>
<gene>
    <name evidence="2" type="primary">gshB</name>
    <name type="ordered locus">SO_0831</name>
</gene>